<accession>B8CGY4</accession>
<name>HUTU_SHEPW</name>
<protein>
    <recommendedName>
        <fullName evidence="1">Urocanate hydratase</fullName>
        <shortName evidence="1">Urocanase</shortName>
        <ecNumber evidence="1">4.2.1.49</ecNumber>
    </recommendedName>
    <alternativeName>
        <fullName evidence="1">Imidazolonepropionate hydrolase</fullName>
    </alternativeName>
</protein>
<feature type="chain" id="PRO_1000129576" description="Urocanate hydratase">
    <location>
        <begin position="1"/>
        <end position="556"/>
    </location>
</feature>
<feature type="active site" evidence="1">
    <location>
        <position position="410"/>
    </location>
</feature>
<feature type="binding site" evidence="1">
    <location>
        <begin position="52"/>
        <end position="53"/>
    </location>
    <ligand>
        <name>NAD(+)</name>
        <dbReference type="ChEBI" id="CHEBI:57540"/>
    </ligand>
</feature>
<feature type="binding site" evidence="1">
    <location>
        <position position="130"/>
    </location>
    <ligand>
        <name>NAD(+)</name>
        <dbReference type="ChEBI" id="CHEBI:57540"/>
    </ligand>
</feature>
<feature type="binding site" evidence="1">
    <location>
        <begin position="176"/>
        <end position="178"/>
    </location>
    <ligand>
        <name>NAD(+)</name>
        <dbReference type="ChEBI" id="CHEBI:57540"/>
    </ligand>
</feature>
<feature type="binding site" evidence="1">
    <location>
        <position position="196"/>
    </location>
    <ligand>
        <name>NAD(+)</name>
        <dbReference type="ChEBI" id="CHEBI:57540"/>
    </ligand>
</feature>
<feature type="binding site" evidence="1">
    <location>
        <position position="201"/>
    </location>
    <ligand>
        <name>NAD(+)</name>
        <dbReference type="ChEBI" id="CHEBI:57540"/>
    </ligand>
</feature>
<feature type="binding site" evidence="1">
    <location>
        <begin position="242"/>
        <end position="243"/>
    </location>
    <ligand>
        <name>NAD(+)</name>
        <dbReference type="ChEBI" id="CHEBI:57540"/>
    </ligand>
</feature>
<feature type="binding site" evidence="1">
    <location>
        <begin position="263"/>
        <end position="267"/>
    </location>
    <ligand>
        <name>NAD(+)</name>
        <dbReference type="ChEBI" id="CHEBI:57540"/>
    </ligand>
</feature>
<feature type="binding site" evidence="1">
    <location>
        <begin position="273"/>
        <end position="274"/>
    </location>
    <ligand>
        <name>NAD(+)</name>
        <dbReference type="ChEBI" id="CHEBI:57540"/>
    </ligand>
</feature>
<feature type="binding site" evidence="1">
    <location>
        <position position="322"/>
    </location>
    <ligand>
        <name>NAD(+)</name>
        <dbReference type="ChEBI" id="CHEBI:57540"/>
    </ligand>
</feature>
<feature type="binding site" evidence="1">
    <location>
        <position position="492"/>
    </location>
    <ligand>
        <name>NAD(+)</name>
        <dbReference type="ChEBI" id="CHEBI:57540"/>
    </ligand>
</feature>
<sequence length="556" mass="60366">MDKRHDPSRRIIAPTGTKLSCKSWLTEAPMRMLMNNLHPDVAERPEDLVVYGGIGRAARDWECYDKIVEVLQRLEDDETLLVQSGKPVGVFKTHSNAPRVIIANSNLVPHWANWEHFNELDKKGLAMYGQMTAGSWIYIGSQGIVQGTYETFVAMAKQHFGGSSKGKWILTGGLGGMGGAQPLAGTMAGYSVLTCEVDETRIDFRLRTRYVDKKATTLDEALAMIDEANASGKPVSVGLLANAADVFAELVERGITPDVVTDQTSAHDPLNGYLPQGWTLEQAAQMRKTDEAAVVKAAKQSMAVQVKAMLALQAAGSATTDYGNNIRQMAFEEGVENAFDFPGFVPAYVRPLFCEGIGPFRWAALSGDPEDIYKTDAKVKELIPDNPHLHNWLDMARERIAFQGLPSRICWVGLKDRARLALAFNEMVNNGELSAPVVIGRDHLDSGSVASPNRETESMLDGSDAVSDWPLMNALLNTASGATWVSLHHGGGVGMGFSQHSGVVIVADGTDDAAARLGRVLWNDPATGVMRHADAGYDIAKDCAKEQGLDLPMLEK</sequence>
<dbReference type="EC" id="4.2.1.49" evidence="1"/>
<dbReference type="EMBL" id="CP000472">
    <property type="protein sequence ID" value="ACJ26977.1"/>
    <property type="molecule type" value="Genomic_DNA"/>
</dbReference>
<dbReference type="RefSeq" id="WP_020910361.1">
    <property type="nucleotide sequence ID" value="NC_011566.1"/>
</dbReference>
<dbReference type="SMR" id="B8CGY4"/>
<dbReference type="STRING" id="225849.swp_0133"/>
<dbReference type="KEGG" id="swp:swp_0133"/>
<dbReference type="eggNOG" id="COG2987">
    <property type="taxonomic scope" value="Bacteria"/>
</dbReference>
<dbReference type="HOGENOM" id="CLU_018868_0_1_6"/>
<dbReference type="OrthoDB" id="9764874at2"/>
<dbReference type="UniPathway" id="UPA00379">
    <property type="reaction ID" value="UER00550"/>
</dbReference>
<dbReference type="Proteomes" id="UP000000753">
    <property type="component" value="Chromosome"/>
</dbReference>
<dbReference type="GO" id="GO:0005737">
    <property type="term" value="C:cytoplasm"/>
    <property type="evidence" value="ECO:0007669"/>
    <property type="project" value="UniProtKB-SubCell"/>
</dbReference>
<dbReference type="GO" id="GO:0016153">
    <property type="term" value="F:urocanate hydratase activity"/>
    <property type="evidence" value="ECO:0007669"/>
    <property type="project" value="UniProtKB-UniRule"/>
</dbReference>
<dbReference type="GO" id="GO:0019556">
    <property type="term" value="P:L-histidine catabolic process to glutamate and formamide"/>
    <property type="evidence" value="ECO:0007669"/>
    <property type="project" value="UniProtKB-UniPathway"/>
</dbReference>
<dbReference type="GO" id="GO:0019557">
    <property type="term" value="P:L-histidine catabolic process to glutamate and formate"/>
    <property type="evidence" value="ECO:0007669"/>
    <property type="project" value="UniProtKB-UniPathway"/>
</dbReference>
<dbReference type="FunFam" id="3.40.50.10730:FF:000001">
    <property type="entry name" value="Urocanate hydratase"/>
    <property type="match status" value="1"/>
</dbReference>
<dbReference type="Gene3D" id="3.40.50.10730">
    <property type="entry name" value="Urocanase like domains"/>
    <property type="match status" value="1"/>
</dbReference>
<dbReference type="Gene3D" id="3.40.1770.10">
    <property type="entry name" value="Urocanase superfamily"/>
    <property type="match status" value="1"/>
</dbReference>
<dbReference type="HAMAP" id="MF_00577">
    <property type="entry name" value="HutU"/>
    <property type="match status" value="1"/>
</dbReference>
<dbReference type="InterPro" id="IPR055351">
    <property type="entry name" value="Urocanase"/>
</dbReference>
<dbReference type="InterPro" id="IPR023637">
    <property type="entry name" value="Urocanase-like"/>
</dbReference>
<dbReference type="InterPro" id="IPR035401">
    <property type="entry name" value="Urocanase_C"/>
</dbReference>
<dbReference type="InterPro" id="IPR038364">
    <property type="entry name" value="Urocanase_central_sf"/>
</dbReference>
<dbReference type="InterPro" id="IPR023636">
    <property type="entry name" value="Urocanase_CS"/>
</dbReference>
<dbReference type="InterPro" id="IPR035400">
    <property type="entry name" value="Urocanase_N"/>
</dbReference>
<dbReference type="InterPro" id="IPR035085">
    <property type="entry name" value="Urocanase_Rossmann-like"/>
</dbReference>
<dbReference type="InterPro" id="IPR036190">
    <property type="entry name" value="Urocanase_sf"/>
</dbReference>
<dbReference type="NCBIfam" id="TIGR01228">
    <property type="entry name" value="hutU"/>
    <property type="match status" value="1"/>
</dbReference>
<dbReference type="NCBIfam" id="NF003820">
    <property type="entry name" value="PRK05414.1"/>
    <property type="match status" value="1"/>
</dbReference>
<dbReference type="PANTHER" id="PTHR12216">
    <property type="entry name" value="UROCANATE HYDRATASE"/>
    <property type="match status" value="1"/>
</dbReference>
<dbReference type="PANTHER" id="PTHR12216:SF4">
    <property type="entry name" value="UROCANATE HYDRATASE"/>
    <property type="match status" value="1"/>
</dbReference>
<dbReference type="Pfam" id="PF01175">
    <property type="entry name" value="Urocanase"/>
    <property type="match status" value="1"/>
</dbReference>
<dbReference type="Pfam" id="PF17392">
    <property type="entry name" value="Urocanase_C"/>
    <property type="match status" value="1"/>
</dbReference>
<dbReference type="Pfam" id="PF17391">
    <property type="entry name" value="Urocanase_N"/>
    <property type="match status" value="1"/>
</dbReference>
<dbReference type="PIRSF" id="PIRSF001423">
    <property type="entry name" value="Urocanate_hydrat"/>
    <property type="match status" value="1"/>
</dbReference>
<dbReference type="SUPFAM" id="SSF111326">
    <property type="entry name" value="Urocanase"/>
    <property type="match status" value="1"/>
</dbReference>
<dbReference type="PROSITE" id="PS01233">
    <property type="entry name" value="UROCANASE"/>
    <property type="match status" value="1"/>
</dbReference>
<evidence type="ECO:0000255" key="1">
    <source>
        <dbReference type="HAMAP-Rule" id="MF_00577"/>
    </source>
</evidence>
<reference key="1">
    <citation type="journal article" date="2008" name="PLoS ONE">
        <title>Environmental adaptation: genomic analysis of the piezotolerant and psychrotolerant deep-sea iron reducing bacterium Shewanella piezotolerans WP3.</title>
        <authorList>
            <person name="Wang F."/>
            <person name="Wang J."/>
            <person name="Jian H."/>
            <person name="Zhang B."/>
            <person name="Li S."/>
            <person name="Wang F."/>
            <person name="Zeng X."/>
            <person name="Gao L."/>
            <person name="Bartlett D.H."/>
            <person name="Yu J."/>
            <person name="Hu S."/>
            <person name="Xiao X."/>
        </authorList>
    </citation>
    <scope>NUCLEOTIDE SEQUENCE [LARGE SCALE GENOMIC DNA]</scope>
    <source>
        <strain>WP3 / JCM 13877</strain>
    </source>
</reference>
<comment type="function">
    <text evidence="1">Catalyzes the conversion of urocanate to 4-imidazolone-5-propionate.</text>
</comment>
<comment type="catalytic activity">
    <reaction evidence="1">
        <text>4-imidazolone-5-propanoate = trans-urocanate + H2O</text>
        <dbReference type="Rhea" id="RHEA:13101"/>
        <dbReference type="ChEBI" id="CHEBI:15377"/>
        <dbReference type="ChEBI" id="CHEBI:17771"/>
        <dbReference type="ChEBI" id="CHEBI:77893"/>
        <dbReference type="EC" id="4.2.1.49"/>
    </reaction>
</comment>
<comment type="cofactor">
    <cofactor evidence="1">
        <name>NAD(+)</name>
        <dbReference type="ChEBI" id="CHEBI:57540"/>
    </cofactor>
    <text evidence="1">Binds 1 NAD(+) per subunit.</text>
</comment>
<comment type="pathway">
    <text evidence="1">Amino-acid degradation; L-histidine degradation into L-glutamate; N-formimidoyl-L-glutamate from L-histidine: step 2/3.</text>
</comment>
<comment type="subcellular location">
    <subcellularLocation>
        <location evidence="1">Cytoplasm</location>
    </subcellularLocation>
</comment>
<comment type="similarity">
    <text evidence="1">Belongs to the urocanase family.</text>
</comment>
<keyword id="KW-0963">Cytoplasm</keyword>
<keyword id="KW-0369">Histidine metabolism</keyword>
<keyword id="KW-0456">Lyase</keyword>
<keyword id="KW-0520">NAD</keyword>
<gene>
    <name evidence="1" type="primary">hutU</name>
    <name type="ordered locus">swp_0133</name>
</gene>
<proteinExistence type="inferred from homology"/>
<organism>
    <name type="scientific">Shewanella piezotolerans (strain WP3 / JCM 13877)</name>
    <dbReference type="NCBI Taxonomy" id="225849"/>
    <lineage>
        <taxon>Bacteria</taxon>
        <taxon>Pseudomonadati</taxon>
        <taxon>Pseudomonadota</taxon>
        <taxon>Gammaproteobacteria</taxon>
        <taxon>Alteromonadales</taxon>
        <taxon>Shewanellaceae</taxon>
        <taxon>Shewanella</taxon>
    </lineage>
</organism>